<feature type="chain" id="PRO_0000062854" description="Octanoyltransferase">
    <location>
        <begin position="1"/>
        <end position="207"/>
    </location>
</feature>
<feature type="domain" description="BPL/LPL catalytic" evidence="2">
    <location>
        <begin position="27"/>
        <end position="203"/>
    </location>
</feature>
<feature type="active site" description="Acyl-thioester intermediate" evidence="1">
    <location>
        <position position="164"/>
    </location>
</feature>
<feature type="binding site" evidence="1">
    <location>
        <begin position="66"/>
        <end position="73"/>
    </location>
    <ligand>
        <name>substrate</name>
    </ligand>
</feature>
<feature type="binding site" evidence="1">
    <location>
        <begin position="133"/>
        <end position="135"/>
    </location>
    <ligand>
        <name>substrate</name>
    </ligand>
</feature>
<feature type="binding site" evidence="1">
    <location>
        <begin position="146"/>
        <end position="148"/>
    </location>
    <ligand>
        <name>substrate</name>
    </ligand>
</feature>
<feature type="site" description="Lowers pKa of active site Cys" evidence="1">
    <location>
        <position position="130"/>
    </location>
</feature>
<proteinExistence type="inferred from homology"/>
<organism>
    <name type="scientific">Neisseria meningitidis serogroup B (strain ATCC BAA-335 / MC58)</name>
    <dbReference type="NCBI Taxonomy" id="122586"/>
    <lineage>
        <taxon>Bacteria</taxon>
        <taxon>Pseudomonadati</taxon>
        <taxon>Pseudomonadota</taxon>
        <taxon>Betaproteobacteria</taxon>
        <taxon>Neisseriales</taxon>
        <taxon>Neisseriaceae</taxon>
        <taxon>Neisseria</taxon>
    </lineage>
</organism>
<reference key="1">
    <citation type="journal article" date="2000" name="Science">
        <title>Complete genome sequence of Neisseria meningitidis serogroup B strain MC58.</title>
        <authorList>
            <person name="Tettelin H."/>
            <person name="Saunders N.J."/>
            <person name="Heidelberg J.F."/>
            <person name="Jeffries A.C."/>
            <person name="Nelson K.E."/>
            <person name="Eisen J.A."/>
            <person name="Ketchum K.A."/>
            <person name="Hood D.W."/>
            <person name="Peden J.F."/>
            <person name="Dodson R.J."/>
            <person name="Nelson W.C."/>
            <person name="Gwinn M.L."/>
            <person name="DeBoy R.T."/>
            <person name="Peterson J.D."/>
            <person name="Hickey E.K."/>
            <person name="Haft D.H."/>
            <person name="Salzberg S.L."/>
            <person name="White O."/>
            <person name="Fleischmann R.D."/>
            <person name="Dougherty B.A."/>
            <person name="Mason T.M."/>
            <person name="Ciecko A."/>
            <person name="Parksey D.S."/>
            <person name="Blair E."/>
            <person name="Cittone H."/>
            <person name="Clark E.B."/>
            <person name="Cotton M.D."/>
            <person name="Utterback T.R."/>
            <person name="Khouri H.M."/>
            <person name="Qin H."/>
            <person name="Vamathevan J.J."/>
            <person name="Gill J."/>
            <person name="Scarlato V."/>
            <person name="Masignani V."/>
            <person name="Pizza M."/>
            <person name="Grandi G."/>
            <person name="Sun L."/>
            <person name="Smith H.O."/>
            <person name="Fraser C.M."/>
            <person name="Moxon E.R."/>
            <person name="Rappuoli R."/>
            <person name="Venter J.C."/>
        </authorList>
    </citation>
    <scope>NUCLEOTIDE SEQUENCE [LARGE SCALE GENOMIC DNA]</scope>
    <source>
        <strain>ATCC BAA-335 / MC58</strain>
    </source>
</reference>
<evidence type="ECO:0000255" key="1">
    <source>
        <dbReference type="HAMAP-Rule" id="MF_00013"/>
    </source>
</evidence>
<evidence type="ECO:0000255" key="2">
    <source>
        <dbReference type="PROSITE-ProRule" id="PRU01067"/>
    </source>
</evidence>
<protein>
    <recommendedName>
        <fullName evidence="1">Octanoyltransferase</fullName>
        <ecNumber evidence="1">2.3.1.181</ecNumber>
    </recommendedName>
    <alternativeName>
        <fullName evidence="1">Lipoate-protein ligase B</fullName>
    </alternativeName>
    <alternativeName>
        <fullName evidence="1">Lipoyl/octanoyl transferase</fullName>
    </alternativeName>
    <alternativeName>
        <fullName evidence="1">Octanoyl-[acyl-carrier-protein]-protein N-octanoyltransferase</fullName>
    </alternativeName>
</protein>
<dbReference type="EC" id="2.3.1.181" evidence="1"/>
<dbReference type="EMBL" id="AE002098">
    <property type="protein sequence ID" value="AAF41599.2"/>
    <property type="molecule type" value="Genomic_DNA"/>
</dbReference>
<dbReference type="PIR" id="E81109">
    <property type="entry name" value="E81109"/>
</dbReference>
<dbReference type="RefSeq" id="NP_274242.2">
    <property type="nucleotide sequence ID" value="NC_003112.2"/>
</dbReference>
<dbReference type="RefSeq" id="WP_002217173.1">
    <property type="nucleotide sequence ID" value="NC_003112.2"/>
</dbReference>
<dbReference type="SMR" id="Q9JZA4"/>
<dbReference type="FunCoup" id="Q9JZA4">
    <property type="interactions" value="324"/>
</dbReference>
<dbReference type="STRING" id="122586.NMB1217"/>
<dbReference type="PaxDb" id="122586-NMB1217"/>
<dbReference type="KEGG" id="nme:NMB1217"/>
<dbReference type="PATRIC" id="fig|122586.8.peg.1520"/>
<dbReference type="HOGENOM" id="CLU_035168_3_1_4"/>
<dbReference type="InParanoid" id="Q9JZA4"/>
<dbReference type="OrthoDB" id="9787061at2"/>
<dbReference type="UniPathway" id="UPA00538">
    <property type="reaction ID" value="UER00592"/>
</dbReference>
<dbReference type="Proteomes" id="UP000000425">
    <property type="component" value="Chromosome"/>
</dbReference>
<dbReference type="GO" id="GO:0005737">
    <property type="term" value="C:cytoplasm"/>
    <property type="evidence" value="ECO:0007669"/>
    <property type="project" value="UniProtKB-SubCell"/>
</dbReference>
<dbReference type="GO" id="GO:0033819">
    <property type="term" value="F:lipoyl(octanoyl) transferase activity"/>
    <property type="evidence" value="ECO:0000318"/>
    <property type="project" value="GO_Central"/>
</dbReference>
<dbReference type="GO" id="GO:0036211">
    <property type="term" value="P:protein modification process"/>
    <property type="evidence" value="ECO:0007669"/>
    <property type="project" value="InterPro"/>
</dbReference>
<dbReference type="CDD" id="cd16444">
    <property type="entry name" value="LipB"/>
    <property type="match status" value="1"/>
</dbReference>
<dbReference type="FunFam" id="3.30.930.10:FF:000020">
    <property type="entry name" value="Octanoyltransferase"/>
    <property type="match status" value="1"/>
</dbReference>
<dbReference type="Gene3D" id="3.30.930.10">
    <property type="entry name" value="Bira Bifunctional Protein, Domain 2"/>
    <property type="match status" value="1"/>
</dbReference>
<dbReference type="HAMAP" id="MF_00013">
    <property type="entry name" value="LipB"/>
    <property type="match status" value="1"/>
</dbReference>
<dbReference type="InterPro" id="IPR045864">
    <property type="entry name" value="aa-tRNA-synth_II/BPL/LPL"/>
</dbReference>
<dbReference type="InterPro" id="IPR004143">
    <property type="entry name" value="BPL_LPL_catalytic"/>
</dbReference>
<dbReference type="InterPro" id="IPR000544">
    <property type="entry name" value="Octanoyltransferase"/>
</dbReference>
<dbReference type="InterPro" id="IPR020605">
    <property type="entry name" value="Octanoyltransferase_CS"/>
</dbReference>
<dbReference type="NCBIfam" id="TIGR00214">
    <property type="entry name" value="lipB"/>
    <property type="match status" value="1"/>
</dbReference>
<dbReference type="NCBIfam" id="NF010922">
    <property type="entry name" value="PRK14342.1"/>
    <property type="match status" value="1"/>
</dbReference>
<dbReference type="PANTHER" id="PTHR10993:SF7">
    <property type="entry name" value="LIPOYLTRANSFERASE 2, MITOCHONDRIAL-RELATED"/>
    <property type="match status" value="1"/>
</dbReference>
<dbReference type="PANTHER" id="PTHR10993">
    <property type="entry name" value="OCTANOYLTRANSFERASE"/>
    <property type="match status" value="1"/>
</dbReference>
<dbReference type="Pfam" id="PF21948">
    <property type="entry name" value="LplA-B_cat"/>
    <property type="match status" value="1"/>
</dbReference>
<dbReference type="PIRSF" id="PIRSF016262">
    <property type="entry name" value="LPLase"/>
    <property type="match status" value="1"/>
</dbReference>
<dbReference type="SUPFAM" id="SSF55681">
    <property type="entry name" value="Class II aaRS and biotin synthetases"/>
    <property type="match status" value="1"/>
</dbReference>
<dbReference type="PROSITE" id="PS51733">
    <property type="entry name" value="BPL_LPL_CATALYTIC"/>
    <property type="match status" value="1"/>
</dbReference>
<dbReference type="PROSITE" id="PS01313">
    <property type="entry name" value="LIPB"/>
    <property type="match status" value="1"/>
</dbReference>
<sequence>MKIIHKGLVEYLPTFEAMKTFNAGRNADTEDELWVVEHPPVFTQGLAGKPEHLLIRDDIPVVQIDRGGQITYHGPGQLVVYTMIDFKRRKTSVRNIVSALENSIIATLAEYGIEAAADPKRPGVYVGERKIASLGLRIKNGSVYHGLALNVNMDLSPFTHINPCGYAGMEMTQIADFVQPCPTPDEVAAKLTAHLETQFTPKADNNE</sequence>
<comment type="function">
    <text evidence="1">Catalyzes the transfer of endogenously produced octanoic acid from octanoyl-acyl-carrier-protein onto the lipoyl domains of lipoate-dependent enzymes. Lipoyl-ACP can also act as a substrate although octanoyl-ACP is likely to be the physiological substrate.</text>
</comment>
<comment type="catalytic activity">
    <reaction evidence="1">
        <text>octanoyl-[ACP] + L-lysyl-[protein] = N(6)-octanoyl-L-lysyl-[protein] + holo-[ACP] + H(+)</text>
        <dbReference type="Rhea" id="RHEA:17665"/>
        <dbReference type="Rhea" id="RHEA-COMP:9636"/>
        <dbReference type="Rhea" id="RHEA-COMP:9685"/>
        <dbReference type="Rhea" id="RHEA-COMP:9752"/>
        <dbReference type="Rhea" id="RHEA-COMP:9928"/>
        <dbReference type="ChEBI" id="CHEBI:15378"/>
        <dbReference type="ChEBI" id="CHEBI:29969"/>
        <dbReference type="ChEBI" id="CHEBI:64479"/>
        <dbReference type="ChEBI" id="CHEBI:78463"/>
        <dbReference type="ChEBI" id="CHEBI:78809"/>
        <dbReference type="EC" id="2.3.1.181"/>
    </reaction>
</comment>
<comment type="pathway">
    <text evidence="1">Protein modification; protein lipoylation via endogenous pathway; protein N(6)-(lipoyl)lysine from octanoyl-[acyl-carrier-protein]: step 1/2.</text>
</comment>
<comment type="subcellular location">
    <subcellularLocation>
        <location evidence="1">Cytoplasm</location>
    </subcellularLocation>
</comment>
<comment type="miscellaneous">
    <text evidence="1">In the reaction, the free carboxyl group of octanoic acid is attached via an amide linkage to the epsilon-amino group of a specific lysine residue of lipoyl domains of lipoate-dependent enzymes.</text>
</comment>
<comment type="similarity">
    <text evidence="1">Belongs to the LipB family.</text>
</comment>
<gene>
    <name evidence="1" type="primary">lipB</name>
    <name type="ordered locus">NMB1217</name>
</gene>
<name>LIPB_NEIMB</name>
<accession>Q9JZA4</accession>
<keyword id="KW-0012">Acyltransferase</keyword>
<keyword id="KW-0963">Cytoplasm</keyword>
<keyword id="KW-1185">Reference proteome</keyword>
<keyword id="KW-0808">Transferase</keyword>